<proteinExistence type="inferred from homology"/>
<evidence type="ECO:0000255" key="1">
    <source>
        <dbReference type="HAMAP-Rule" id="MF_00297"/>
    </source>
</evidence>
<evidence type="ECO:0000305" key="2"/>
<reference key="1">
    <citation type="journal article" date="1995" name="Science">
        <title>Whole-genome random sequencing and assembly of Haemophilus influenzae Rd.</title>
        <authorList>
            <person name="Fleischmann R.D."/>
            <person name="Adams M.D."/>
            <person name="White O."/>
            <person name="Clayton R.A."/>
            <person name="Kirkness E.F."/>
            <person name="Kerlavage A.R."/>
            <person name="Bult C.J."/>
            <person name="Tomb J.-F."/>
            <person name="Dougherty B.A."/>
            <person name="Merrick J.M."/>
            <person name="McKenney K."/>
            <person name="Sutton G.G."/>
            <person name="FitzHugh W."/>
            <person name="Fields C.A."/>
            <person name="Gocayne J.D."/>
            <person name="Scott J.D."/>
            <person name="Shirley R."/>
            <person name="Liu L.-I."/>
            <person name="Glodek A."/>
            <person name="Kelley J.M."/>
            <person name="Weidman J.F."/>
            <person name="Phillips C.A."/>
            <person name="Spriggs T."/>
            <person name="Hedblom E."/>
            <person name="Cotton M.D."/>
            <person name="Utterback T.R."/>
            <person name="Hanna M.C."/>
            <person name="Nguyen D.T."/>
            <person name="Saudek D.M."/>
            <person name="Brandon R.C."/>
            <person name="Fine L.D."/>
            <person name="Fritchman J.L."/>
            <person name="Fuhrmann J.L."/>
            <person name="Geoghagen N.S.M."/>
            <person name="Gnehm C.L."/>
            <person name="McDonald L.A."/>
            <person name="Small K.V."/>
            <person name="Fraser C.M."/>
            <person name="Smith H.O."/>
            <person name="Venter J.C."/>
        </authorList>
    </citation>
    <scope>NUCLEOTIDE SEQUENCE [LARGE SCALE GENOMIC DNA]</scope>
    <source>
        <strain>ATCC 51907 / DSM 11121 / KW20 / Rd</strain>
    </source>
</reference>
<organism>
    <name type="scientific">Haemophilus influenzae (strain ATCC 51907 / DSM 11121 / KW20 / Rd)</name>
    <dbReference type="NCBI Taxonomy" id="71421"/>
    <lineage>
        <taxon>Bacteria</taxon>
        <taxon>Pseudomonadati</taxon>
        <taxon>Pseudomonadota</taxon>
        <taxon>Gammaproteobacteria</taxon>
        <taxon>Pasteurellales</taxon>
        <taxon>Pasteurellaceae</taxon>
        <taxon>Haemophilus</taxon>
    </lineage>
</organism>
<sequence length="264" mass="30163">MKILQQDDFGYWLLTQGSNLYLVNNELPFGIAKDIDLEGLQAMQIGEWKNYPLWLVAEQESDEREYVSLSNLLSLPEDEFHILSRGVEINHFLKTHKFCGKCGHKTQQTQDELAVQCIHCGYQTYPVICPSIIVAVRRGHEILLANHKRHYSPNGGIYTTLAGFVEVGETFEQAVQREVFEETGISIKNLRYFGSQPWAFPNSQMVGFLADYESGEITLQESEIHDAQWFSYDQPLPELPPTGTIARKLIHVTLELCKAEHKCD</sequence>
<comment type="function">
    <text evidence="1">mRNA decapping enzyme that specifically removes the nicotinamide adenine dinucleotide (NAD) cap from a subset of mRNAs by hydrolyzing the diphosphate linkage to produce nicotinamide mononucleotide (NMN) and 5' monophosphate mRNA. The NAD-cap is present at the 5'-end of some mRNAs and stabilizes RNA against 5'-processing. Has preference for mRNAs with a 5'-end purine. Catalyzes the hydrolysis of a broad range of dinucleotide pyrophosphates.</text>
</comment>
<comment type="catalytic activity">
    <reaction evidence="1">
        <text>a 5'-end NAD(+)-phospho-ribonucleoside in mRNA + H2O = a 5'-end phospho-adenosine-phospho-ribonucleoside in mRNA + beta-nicotinamide D-ribonucleotide + 2 H(+)</text>
        <dbReference type="Rhea" id="RHEA:60876"/>
        <dbReference type="Rhea" id="RHEA-COMP:15698"/>
        <dbReference type="Rhea" id="RHEA-COMP:15719"/>
        <dbReference type="ChEBI" id="CHEBI:14649"/>
        <dbReference type="ChEBI" id="CHEBI:15377"/>
        <dbReference type="ChEBI" id="CHEBI:15378"/>
        <dbReference type="ChEBI" id="CHEBI:144029"/>
        <dbReference type="ChEBI" id="CHEBI:144051"/>
    </reaction>
    <physiologicalReaction direction="left-to-right" evidence="1">
        <dbReference type="Rhea" id="RHEA:60877"/>
    </physiologicalReaction>
</comment>
<comment type="catalytic activity">
    <reaction evidence="1">
        <text>NAD(+) + H2O = beta-nicotinamide D-ribonucleotide + AMP + 2 H(+)</text>
        <dbReference type="Rhea" id="RHEA:11800"/>
        <dbReference type="ChEBI" id="CHEBI:14649"/>
        <dbReference type="ChEBI" id="CHEBI:15377"/>
        <dbReference type="ChEBI" id="CHEBI:15378"/>
        <dbReference type="ChEBI" id="CHEBI:57540"/>
        <dbReference type="ChEBI" id="CHEBI:456215"/>
        <dbReference type="EC" id="3.6.1.22"/>
    </reaction>
</comment>
<comment type="catalytic activity">
    <reaction evidence="1">
        <text>NADH + H2O = reduced beta-nicotinamide D-ribonucleotide + AMP + 2 H(+)</text>
        <dbReference type="Rhea" id="RHEA:48868"/>
        <dbReference type="ChEBI" id="CHEBI:15377"/>
        <dbReference type="ChEBI" id="CHEBI:15378"/>
        <dbReference type="ChEBI" id="CHEBI:57945"/>
        <dbReference type="ChEBI" id="CHEBI:90832"/>
        <dbReference type="ChEBI" id="CHEBI:456215"/>
        <dbReference type="EC" id="3.6.1.22"/>
    </reaction>
</comment>
<comment type="cofactor">
    <cofactor evidence="1">
        <name>Mg(2+)</name>
        <dbReference type="ChEBI" id="CHEBI:18420"/>
    </cofactor>
    <cofactor evidence="1">
        <name>Mn(2+)</name>
        <dbReference type="ChEBI" id="CHEBI:29035"/>
    </cofactor>
    <text evidence="1">Divalent metal cations. Mg(2+) or Mn(2+).</text>
</comment>
<comment type="cofactor">
    <cofactor evidence="1">
        <name>Zn(2+)</name>
        <dbReference type="ChEBI" id="CHEBI:29105"/>
    </cofactor>
    <text evidence="1">Binds 1 zinc ion per subunit.</text>
</comment>
<comment type="subunit">
    <text evidence="1">Homodimer.</text>
</comment>
<comment type="similarity">
    <text evidence="1 2">Belongs to the Nudix hydrolase family. NudC subfamily.</text>
</comment>
<keyword id="KW-0378">Hydrolase</keyword>
<keyword id="KW-0460">Magnesium</keyword>
<keyword id="KW-0464">Manganese</keyword>
<keyword id="KW-0479">Metal-binding</keyword>
<keyword id="KW-0520">NAD</keyword>
<keyword id="KW-1185">Reference proteome</keyword>
<keyword id="KW-0862">Zinc</keyword>
<protein>
    <recommendedName>
        <fullName evidence="1">NAD-capped RNA hydrolase NudC</fullName>
        <shortName evidence="1">DeNADding enzyme NudC</shortName>
        <ecNumber evidence="1">3.6.1.-</ecNumber>
    </recommendedName>
    <alternativeName>
        <fullName evidence="1">NADH pyrophosphatase</fullName>
        <ecNumber evidence="1">3.6.1.22</ecNumber>
    </alternativeName>
</protein>
<name>NUDC_HAEIN</name>
<feature type="chain" id="PRO_0000056967" description="NAD-capped RNA hydrolase NudC">
    <location>
        <begin position="1"/>
        <end position="264"/>
    </location>
</feature>
<feature type="domain" description="Nudix hydrolase" evidence="1">
    <location>
        <begin position="126"/>
        <end position="253"/>
    </location>
</feature>
<feature type="short sequence motif" description="Nudix box" evidence="1">
    <location>
        <begin position="163"/>
        <end position="184"/>
    </location>
</feature>
<feature type="binding site" evidence="1">
    <location>
        <position position="99"/>
    </location>
    <ligand>
        <name>Zn(2+)</name>
        <dbReference type="ChEBI" id="CHEBI:29105"/>
    </ligand>
</feature>
<feature type="binding site" evidence="1">
    <location>
        <position position="102"/>
    </location>
    <ligand>
        <name>Zn(2+)</name>
        <dbReference type="ChEBI" id="CHEBI:29105"/>
    </ligand>
</feature>
<feature type="binding site" evidence="1">
    <location>
        <position position="112"/>
    </location>
    <ligand>
        <name>substrate</name>
    </ligand>
</feature>
<feature type="binding site" evidence="1">
    <location>
        <position position="117"/>
    </location>
    <ligand>
        <name>Zn(2+)</name>
        <dbReference type="ChEBI" id="CHEBI:29105"/>
    </ligand>
</feature>
<feature type="binding site" evidence="1">
    <location>
        <position position="120"/>
    </location>
    <ligand>
        <name>Zn(2+)</name>
        <dbReference type="ChEBI" id="CHEBI:29105"/>
    </ligand>
</feature>
<feature type="binding site" evidence="1">
    <location>
        <position position="125"/>
    </location>
    <ligand>
        <name>substrate</name>
    </ligand>
</feature>
<feature type="binding site" evidence="1">
    <location>
        <position position="162"/>
    </location>
    <ligand>
        <name>a divalent metal cation</name>
        <dbReference type="ChEBI" id="CHEBI:60240"/>
        <label>1</label>
    </ligand>
</feature>
<feature type="binding site" evidence="1">
    <location>
        <position position="178"/>
    </location>
    <ligand>
        <name>a divalent metal cation</name>
        <dbReference type="ChEBI" id="CHEBI:60240"/>
        <label>2</label>
    </ligand>
</feature>
<feature type="binding site" evidence="1">
    <location>
        <position position="178"/>
    </location>
    <ligand>
        <name>a divalent metal cation</name>
        <dbReference type="ChEBI" id="CHEBI:60240"/>
        <label>3</label>
    </ligand>
</feature>
<feature type="binding site" evidence="1">
    <location>
        <position position="182"/>
    </location>
    <ligand>
        <name>a divalent metal cation</name>
        <dbReference type="ChEBI" id="CHEBI:60240"/>
        <label>1</label>
    </ligand>
</feature>
<feature type="binding site" evidence="1">
    <location>
        <position position="182"/>
    </location>
    <ligand>
        <name>a divalent metal cation</name>
        <dbReference type="ChEBI" id="CHEBI:60240"/>
        <label>3</label>
    </ligand>
</feature>
<feature type="binding site" evidence="1">
    <location>
        <begin position="196"/>
        <end position="203"/>
    </location>
    <ligand>
        <name>substrate</name>
    </ligand>
</feature>
<feature type="binding site" evidence="1">
    <location>
        <position position="223"/>
    </location>
    <ligand>
        <name>a divalent metal cation</name>
        <dbReference type="ChEBI" id="CHEBI:60240"/>
        <label>1</label>
    </ligand>
</feature>
<feature type="binding site" evidence="1">
    <location>
        <position position="223"/>
    </location>
    <ligand>
        <name>a divalent metal cation</name>
        <dbReference type="ChEBI" id="CHEBI:60240"/>
        <label>3</label>
    </ligand>
</feature>
<feature type="binding site" evidence="1">
    <location>
        <position position="246"/>
    </location>
    <ligand>
        <name>substrate</name>
    </ligand>
</feature>
<dbReference type="EC" id="3.6.1.-" evidence="1"/>
<dbReference type="EC" id="3.6.1.22" evidence="1"/>
<dbReference type="EMBL" id="L42023">
    <property type="protein sequence ID" value="AAC22091.1"/>
    <property type="molecule type" value="Genomic_DNA"/>
</dbReference>
<dbReference type="PIR" id="F64152">
    <property type="entry name" value="F64152"/>
</dbReference>
<dbReference type="RefSeq" id="NP_438593.1">
    <property type="nucleotide sequence ID" value="NC_000907.1"/>
</dbReference>
<dbReference type="SMR" id="P44710"/>
<dbReference type="STRING" id="71421.HI_0432"/>
<dbReference type="EnsemblBacteria" id="AAC22091">
    <property type="protein sequence ID" value="AAC22091"/>
    <property type="gene ID" value="HI_0432"/>
</dbReference>
<dbReference type="KEGG" id="hin:HI_0432"/>
<dbReference type="PATRIC" id="fig|71421.8.peg.452"/>
<dbReference type="eggNOG" id="COG2816">
    <property type="taxonomic scope" value="Bacteria"/>
</dbReference>
<dbReference type="HOGENOM" id="CLU_037162_0_1_6"/>
<dbReference type="OrthoDB" id="9791656at2"/>
<dbReference type="PhylomeDB" id="P44710"/>
<dbReference type="BioCyc" id="HINF71421:G1GJ1-447-MONOMER"/>
<dbReference type="Proteomes" id="UP000000579">
    <property type="component" value="Chromosome"/>
</dbReference>
<dbReference type="GO" id="GO:0000287">
    <property type="term" value="F:magnesium ion binding"/>
    <property type="evidence" value="ECO:0007669"/>
    <property type="project" value="UniProtKB-UniRule"/>
</dbReference>
<dbReference type="GO" id="GO:0030145">
    <property type="term" value="F:manganese ion binding"/>
    <property type="evidence" value="ECO:0007669"/>
    <property type="project" value="UniProtKB-UniRule"/>
</dbReference>
<dbReference type="GO" id="GO:0000210">
    <property type="term" value="F:NAD+ diphosphatase activity"/>
    <property type="evidence" value="ECO:0007669"/>
    <property type="project" value="UniProtKB-UniRule"/>
</dbReference>
<dbReference type="GO" id="GO:0035529">
    <property type="term" value="F:NADH pyrophosphatase activity"/>
    <property type="evidence" value="ECO:0000318"/>
    <property type="project" value="GO_Central"/>
</dbReference>
<dbReference type="GO" id="GO:0110153">
    <property type="term" value="F:RNA NAD-cap (NMN-forming) hydrolase activity"/>
    <property type="evidence" value="ECO:0007669"/>
    <property type="project" value="RHEA"/>
</dbReference>
<dbReference type="GO" id="GO:0008270">
    <property type="term" value="F:zinc ion binding"/>
    <property type="evidence" value="ECO:0007669"/>
    <property type="project" value="UniProtKB-UniRule"/>
</dbReference>
<dbReference type="GO" id="GO:0019677">
    <property type="term" value="P:NAD catabolic process"/>
    <property type="evidence" value="ECO:0000318"/>
    <property type="project" value="GO_Central"/>
</dbReference>
<dbReference type="GO" id="GO:0006734">
    <property type="term" value="P:NADH metabolic process"/>
    <property type="evidence" value="ECO:0000318"/>
    <property type="project" value="GO_Central"/>
</dbReference>
<dbReference type="GO" id="GO:0006742">
    <property type="term" value="P:NADP catabolic process"/>
    <property type="evidence" value="ECO:0000318"/>
    <property type="project" value="GO_Central"/>
</dbReference>
<dbReference type="CDD" id="cd03429">
    <property type="entry name" value="NUDIX_NADH_pyrophosphatase_Nudt13"/>
    <property type="match status" value="1"/>
</dbReference>
<dbReference type="FunFam" id="3.90.79.10:FF:000004">
    <property type="entry name" value="NADH pyrophosphatase"/>
    <property type="match status" value="1"/>
</dbReference>
<dbReference type="Gene3D" id="3.90.79.20">
    <property type="match status" value="1"/>
</dbReference>
<dbReference type="Gene3D" id="3.90.79.10">
    <property type="entry name" value="Nucleoside Triphosphate Pyrophosphohydrolase"/>
    <property type="match status" value="1"/>
</dbReference>
<dbReference type="HAMAP" id="MF_00297">
    <property type="entry name" value="Nudix_NudC"/>
    <property type="match status" value="1"/>
</dbReference>
<dbReference type="InterPro" id="IPR050241">
    <property type="entry name" value="NAD-cap_RNA_hydrolase_NudC"/>
</dbReference>
<dbReference type="InterPro" id="IPR049734">
    <property type="entry name" value="NudC-like_C"/>
</dbReference>
<dbReference type="InterPro" id="IPR015797">
    <property type="entry name" value="NUDIX_hydrolase-like_dom_sf"/>
</dbReference>
<dbReference type="InterPro" id="IPR020084">
    <property type="entry name" value="NUDIX_hydrolase_CS"/>
</dbReference>
<dbReference type="InterPro" id="IPR000086">
    <property type="entry name" value="NUDIX_hydrolase_dom"/>
</dbReference>
<dbReference type="InterPro" id="IPR022925">
    <property type="entry name" value="RNA_Hydrolase_NudC"/>
</dbReference>
<dbReference type="InterPro" id="IPR015376">
    <property type="entry name" value="Znr_NADH_PPase"/>
</dbReference>
<dbReference type="NCBIfam" id="NF001299">
    <property type="entry name" value="PRK00241.1"/>
    <property type="match status" value="1"/>
</dbReference>
<dbReference type="PANTHER" id="PTHR42904:SF6">
    <property type="entry name" value="NAD-CAPPED RNA HYDROLASE NUDT12"/>
    <property type="match status" value="1"/>
</dbReference>
<dbReference type="PANTHER" id="PTHR42904">
    <property type="entry name" value="NUDIX HYDROLASE, NUDC SUBFAMILY"/>
    <property type="match status" value="1"/>
</dbReference>
<dbReference type="Pfam" id="PF00293">
    <property type="entry name" value="NUDIX"/>
    <property type="match status" value="1"/>
</dbReference>
<dbReference type="Pfam" id="PF09297">
    <property type="entry name" value="Zn_ribbon_NUD"/>
    <property type="match status" value="1"/>
</dbReference>
<dbReference type="SUPFAM" id="SSF55811">
    <property type="entry name" value="Nudix"/>
    <property type="match status" value="2"/>
</dbReference>
<dbReference type="PROSITE" id="PS51462">
    <property type="entry name" value="NUDIX"/>
    <property type="match status" value="1"/>
</dbReference>
<dbReference type="PROSITE" id="PS00893">
    <property type="entry name" value="NUDIX_BOX"/>
    <property type="match status" value="1"/>
</dbReference>
<gene>
    <name evidence="1" type="primary">nudC</name>
    <name type="ordered locus">HI_0432</name>
</gene>
<accession>P44710</accession>